<name>HLDE_BLOFL</name>
<gene>
    <name evidence="1" type="primary">hldE</name>
    <name type="synonym">rfaE</name>
    <name type="ordered locus">Bfl063</name>
</gene>
<sequence>MTVILPDFLKSNVLVVGDIMLDRYWYGSTNKISFESPVPVVEINNVIDIPGGAANVAMNIASLGGRVRLIGLVGVDDAAQRLKKRLTECKIKWNFISVDTHPTIMKLRVMSRNQQMIRLDFEKKFNNVNTDQLMNVIKVYLPQYKVLALSDYAKGTLDCVEEIIKIARFFKIPIIIDPKGVQFSKYKGATILTPNMSEFEAIVGFCSNEEIIIKRAKELMNEYDLLALLITRSDQGMTLLQRSLDPLYFSAQSKEVYDVTGAGDTVVGVLSAALSLGENLEKSCFLANAAAGSVVEKSGTSTVNVAEINNVVQKYEYTKIPTGIVDRGLLKYVVSVVRGRGEKIVMTNGVFDILHYGHISYLMDAKKLGHRLIVAVNSDKSTRRLKGKHRPINVLERRMFVLSALSMVDWVVSFDEDNPIQLILEISPDFLVKGGDYNVNNIVGGKEVLRQGGQVCVLKFQEDCSSSSIIDTMEINEIN</sequence>
<reference key="1">
    <citation type="journal article" date="2003" name="Proc. Natl. Acad. Sci. U.S.A.">
        <title>The genome sequence of Blochmannia floridanus: comparative analysis of reduced genomes.</title>
        <authorList>
            <person name="Gil R."/>
            <person name="Silva F.J."/>
            <person name="Zientz E."/>
            <person name="Delmotte F."/>
            <person name="Gonzalez-Candelas F."/>
            <person name="Latorre A."/>
            <person name="Rausell C."/>
            <person name="Kamerbeek J."/>
            <person name="Gadau J."/>
            <person name="Hoelldobler B."/>
            <person name="van Ham R.C.H.J."/>
            <person name="Gross R."/>
            <person name="Moya A."/>
        </authorList>
    </citation>
    <scope>NUCLEOTIDE SEQUENCE [LARGE SCALE GENOMIC DNA]</scope>
</reference>
<evidence type="ECO:0000255" key="1">
    <source>
        <dbReference type="HAMAP-Rule" id="MF_01603"/>
    </source>
</evidence>
<feature type="chain" id="PRO_0000080104" description="Bifunctional protein HldE">
    <location>
        <begin position="1"/>
        <end position="479"/>
    </location>
</feature>
<feature type="region of interest" description="Ribokinase">
    <location>
        <begin position="1"/>
        <end position="319"/>
    </location>
</feature>
<feature type="region of interest" description="Cytidylyltransferase">
    <location>
        <begin position="346"/>
        <end position="479"/>
    </location>
</feature>
<feature type="active site" evidence="1">
    <location>
        <position position="264"/>
    </location>
</feature>
<feature type="binding site" evidence="1">
    <location>
        <begin position="195"/>
        <end position="198"/>
    </location>
    <ligand>
        <name>ATP</name>
        <dbReference type="ChEBI" id="CHEBI:30616"/>
    </ligand>
</feature>
<dbReference type="EC" id="2.7.1.167" evidence="1"/>
<dbReference type="EC" id="2.7.7.70" evidence="1"/>
<dbReference type="EMBL" id="BX248583">
    <property type="protein sequence ID" value="CAD83588.1"/>
    <property type="molecule type" value="Genomic_DNA"/>
</dbReference>
<dbReference type="SMR" id="Q7VQQ6"/>
<dbReference type="STRING" id="203907.Bfl063"/>
<dbReference type="KEGG" id="bfl:Bfl063"/>
<dbReference type="eggNOG" id="COG0615">
    <property type="taxonomic scope" value="Bacteria"/>
</dbReference>
<dbReference type="eggNOG" id="COG2870">
    <property type="taxonomic scope" value="Bacteria"/>
</dbReference>
<dbReference type="HOGENOM" id="CLU_021150_2_1_6"/>
<dbReference type="OrthoDB" id="9802794at2"/>
<dbReference type="UniPathway" id="UPA00356">
    <property type="reaction ID" value="UER00437"/>
</dbReference>
<dbReference type="UniPathway" id="UPA00356">
    <property type="reaction ID" value="UER00439"/>
</dbReference>
<dbReference type="Proteomes" id="UP000002192">
    <property type="component" value="Chromosome"/>
</dbReference>
<dbReference type="GO" id="GO:0005829">
    <property type="term" value="C:cytosol"/>
    <property type="evidence" value="ECO:0007669"/>
    <property type="project" value="TreeGrafter"/>
</dbReference>
<dbReference type="GO" id="GO:0005524">
    <property type="term" value="F:ATP binding"/>
    <property type="evidence" value="ECO:0007669"/>
    <property type="project" value="UniProtKB-UniRule"/>
</dbReference>
<dbReference type="GO" id="GO:0033785">
    <property type="term" value="F:heptose 7-phosphate kinase activity"/>
    <property type="evidence" value="ECO:0007669"/>
    <property type="project" value="UniProtKB-UniRule"/>
</dbReference>
<dbReference type="GO" id="GO:0033786">
    <property type="term" value="F:heptose-1-phosphate adenylyltransferase activity"/>
    <property type="evidence" value="ECO:0007669"/>
    <property type="project" value="UniProtKB-UniRule"/>
</dbReference>
<dbReference type="GO" id="GO:0016773">
    <property type="term" value="F:phosphotransferase activity, alcohol group as acceptor"/>
    <property type="evidence" value="ECO:0007669"/>
    <property type="project" value="InterPro"/>
</dbReference>
<dbReference type="GO" id="GO:0097171">
    <property type="term" value="P:ADP-L-glycero-beta-D-manno-heptose biosynthetic process"/>
    <property type="evidence" value="ECO:0007669"/>
    <property type="project" value="UniProtKB-UniPathway"/>
</dbReference>
<dbReference type="CDD" id="cd01172">
    <property type="entry name" value="RfaE_like"/>
    <property type="match status" value="1"/>
</dbReference>
<dbReference type="FunFam" id="3.40.1190.20:FF:000002">
    <property type="entry name" value="Bifunctional protein HldE"/>
    <property type="match status" value="1"/>
</dbReference>
<dbReference type="Gene3D" id="3.40.1190.20">
    <property type="match status" value="1"/>
</dbReference>
<dbReference type="Gene3D" id="3.40.50.620">
    <property type="entry name" value="HUPs"/>
    <property type="match status" value="1"/>
</dbReference>
<dbReference type="HAMAP" id="MF_01603">
    <property type="entry name" value="HldE"/>
    <property type="match status" value="1"/>
</dbReference>
<dbReference type="InterPro" id="IPR023030">
    <property type="entry name" value="Bifunc_HldE"/>
</dbReference>
<dbReference type="InterPro" id="IPR002173">
    <property type="entry name" value="Carboh/pur_kinase_PfkB_CS"/>
</dbReference>
<dbReference type="InterPro" id="IPR004821">
    <property type="entry name" value="Cyt_trans-like"/>
</dbReference>
<dbReference type="InterPro" id="IPR011611">
    <property type="entry name" value="PfkB_dom"/>
</dbReference>
<dbReference type="InterPro" id="IPR011913">
    <property type="entry name" value="RfaE_dom_I"/>
</dbReference>
<dbReference type="InterPro" id="IPR011914">
    <property type="entry name" value="RfaE_dom_II"/>
</dbReference>
<dbReference type="InterPro" id="IPR029056">
    <property type="entry name" value="Ribokinase-like"/>
</dbReference>
<dbReference type="InterPro" id="IPR014729">
    <property type="entry name" value="Rossmann-like_a/b/a_fold"/>
</dbReference>
<dbReference type="NCBIfam" id="TIGR00125">
    <property type="entry name" value="cyt_tran_rel"/>
    <property type="match status" value="1"/>
</dbReference>
<dbReference type="NCBIfam" id="NF008454">
    <property type="entry name" value="PRK11316.1"/>
    <property type="match status" value="1"/>
</dbReference>
<dbReference type="NCBIfam" id="TIGR02198">
    <property type="entry name" value="rfaE_dom_I"/>
    <property type="match status" value="1"/>
</dbReference>
<dbReference type="NCBIfam" id="TIGR02199">
    <property type="entry name" value="rfaE_dom_II"/>
    <property type="match status" value="1"/>
</dbReference>
<dbReference type="PANTHER" id="PTHR46969">
    <property type="entry name" value="BIFUNCTIONAL PROTEIN HLDE"/>
    <property type="match status" value="1"/>
</dbReference>
<dbReference type="PANTHER" id="PTHR46969:SF1">
    <property type="entry name" value="BIFUNCTIONAL PROTEIN HLDE"/>
    <property type="match status" value="1"/>
</dbReference>
<dbReference type="Pfam" id="PF01467">
    <property type="entry name" value="CTP_transf_like"/>
    <property type="match status" value="1"/>
</dbReference>
<dbReference type="Pfam" id="PF00294">
    <property type="entry name" value="PfkB"/>
    <property type="match status" value="1"/>
</dbReference>
<dbReference type="SUPFAM" id="SSF52374">
    <property type="entry name" value="Nucleotidylyl transferase"/>
    <property type="match status" value="1"/>
</dbReference>
<dbReference type="SUPFAM" id="SSF53613">
    <property type="entry name" value="Ribokinase-like"/>
    <property type="match status" value="1"/>
</dbReference>
<dbReference type="PROSITE" id="PS00583">
    <property type="entry name" value="PFKB_KINASES_1"/>
    <property type="match status" value="1"/>
</dbReference>
<accession>Q7VQQ6</accession>
<organism>
    <name type="scientific">Blochmanniella floridana</name>
    <dbReference type="NCBI Taxonomy" id="203907"/>
    <lineage>
        <taxon>Bacteria</taxon>
        <taxon>Pseudomonadati</taxon>
        <taxon>Pseudomonadota</taxon>
        <taxon>Gammaproteobacteria</taxon>
        <taxon>Enterobacterales</taxon>
        <taxon>Enterobacteriaceae</taxon>
        <taxon>ant endosymbionts</taxon>
        <taxon>Candidatus Blochmanniella</taxon>
    </lineage>
</organism>
<protein>
    <recommendedName>
        <fullName evidence="1">Bifunctional protein HldE</fullName>
    </recommendedName>
    <domain>
        <recommendedName>
            <fullName evidence="1">D-beta-D-heptose 7-phosphate kinase</fullName>
            <ecNumber evidence="1">2.7.1.167</ecNumber>
        </recommendedName>
        <alternativeName>
            <fullName evidence="1">D-beta-D-heptose 7-phosphotransferase</fullName>
        </alternativeName>
        <alternativeName>
            <fullName evidence="1">D-glycero-beta-D-manno-heptose-7-phosphate kinase</fullName>
        </alternativeName>
    </domain>
    <domain>
        <recommendedName>
            <fullName evidence="1">D-beta-D-heptose 1-phosphate adenylyltransferase</fullName>
            <ecNumber evidence="1">2.7.7.70</ecNumber>
        </recommendedName>
        <alternativeName>
            <fullName evidence="1">D-glycero-beta-D-manno-heptose 1-phosphate adenylyltransferase</fullName>
        </alternativeName>
    </domain>
</protein>
<comment type="function">
    <text evidence="1">Catalyzes the phosphorylation of D-glycero-D-manno-heptose 7-phosphate at the C-1 position to selectively form D-glycero-beta-D-manno-heptose-1,7-bisphosphate.</text>
</comment>
<comment type="function">
    <text evidence="1">Catalyzes the ADP transfer from ATP to D-glycero-beta-D-manno-heptose 1-phosphate, yielding ADP-D-glycero-beta-D-manno-heptose.</text>
</comment>
<comment type="catalytic activity">
    <reaction evidence="1">
        <text>D-glycero-beta-D-manno-heptose 7-phosphate + ATP = D-glycero-beta-D-manno-heptose 1,7-bisphosphate + ADP + H(+)</text>
        <dbReference type="Rhea" id="RHEA:27473"/>
        <dbReference type="ChEBI" id="CHEBI:15378"/>
        <dbReference type="ChEBI" id="CHEBI:30616"/>
        <dbReference type="ChEBI" id="CHEBI:60204"/>
        <dbReference type="ChEBI" id="CHEBI:60208"/>
        <dbReference type="ChEBI" id="CHEBI:456216"/>
        <dbReference type="EC" id="2.7.1.167"/>
    </reaction>
</comment>
<comment type="catalytic activity">
    <reaction evidence="1">
        <text>D-glycero-beta-D-manno-heptose 1-phosphate + ATP + H(+) = ADP-D-glycero-beta-D-manno-heptose + diphosphate</text>
        <dbReference type="Rhea" id="RHEA:27465"/>
        <dbReference type="ChEBI" id="CHEBI:15378"/>
        <dbReference type="ChEBI" id="CHEBI:30616"/>
        <dbReference type="ChEBI" id="CHEBI:33019"/>
        <dbReference type="ChEBI" id="CHEBI:59967"/>
        <dbReference type="ChEBI" id="CHEBI:61593"/>
        <dbReference type="EC" id="2.7.7.70"/>
    </reaction>
</comment>
<comment type="pathway">
    <text evidence="1">Nucleotide-sugar biosynthesis; ADP-L-glycero-beta-D-manno-heptose biosynthesis; ADP-L-glycero-beta-D-manno-heptose from D-glycero-beta-D-manno-heptose 7-phosphate: step 1/4.</text>
</comment>
<comment type="pathway">
    <text evidence="1">Nucleotide-sugar biosynthesis; ADP-L-glycero-beta-D-manno-heptose biosynthesis; ADP-L-glycero-beta-D-manno-heptose from D-glycero-beta-D-manno-heptose 7-phosphate: step 3/4.</text>
</comment>
<comment type="subunit">
    <text evidence="1">Homodimer.</text>
</comment>
<comment type="similarity">
    <text evidence="1">In the N-terminal section; belongs to the carbohydrate kinase PfkB family.</text>
</comment>
<comment type="similarity">
    <text evidence="1">In the C-terminal section; belongs to the cytidylyltransferase family.</text>
</comment>
<proteinExistence type="inferred from homology"/>
<keyword id="KW-0067">ATP-binding</keyword>
<keyword id="KW-0119">Carbohydrate metabolism</keyword>
<keyword id="KW-0418">Kinase</keyword>
<keyword id="KW-0511">Multifunctional enzyme</keyword>
<keyword id="KW-0547">Nucleotide-binding</keyword>
<keyword id="KW-0548">Nucleotidyltransferase</keyword>
<keyword id="KW-1185">Reference proteome</keyword>
<keyword id="KW-0808">Transferase</keyword>